<comment type="function">
    <text evidence="3 4">Riboflavin transporter localized at the inner mitochondrial membrane of the spermatozoa midpiece, which is required for male fertility (PubMed:33882315). SLC22A14-mediated riboflavin transport is essential for spermatozoa energy generation and motility: riboflavin is the precursor of FMN and FAD, which are coenzymes of many enzymes in the TCA cycle (the citric acid cycle) in mitochondria (PubMed:33882315). Required for sperm motility and normal sperm flagellar structure (PubMed:27811987, PubMed:33882315).</text>
</comment>
<comment type="catalytic activity">
    <reaction evidence="4">
        <text>riboflavin(in) = riboflavin(out)</text>
        <dbReference type="Rhea" id="RHEA:35015"/>
        <dbReference type="ChEBI" id="CHEBI:57986"/>
    </reaction>
</comment>
<comment type="subcellular location">
    <subcellularLocation>
        <location evidence="4">Mitochondrion inner membrane</location>
        <topology evidence="1">Multi-pass membrane protein</topology>
    </subcellularLocation>
    <subcellularLocation>
        <location evidence="3">Cell projection</location>
        <location evidence="3">Cilium</location>
        <location evidence="3">Flagellum membrane</location>
        <topology evidence="1">Multi-pass membrane protein</topology>
    </subcellularLocation>
    <text evidence="3">Localizes to the principle piece of the sperm tail.</text>
</comment>
<comment type="tissue specificity">
    <text evidence="3">Testis-specific (at protein level) (PubMed:27811987). Specifically expressed in male germ cells (at protein level) (PubMed:27811987).</text>
</comment>
<comment type="disruption phenotype">
    <text evidence="3 4">Male mice show severe infertility (PubMed:27811987, PubMed:33882315). Defects are caused by impaired riboflavin transport that suppresses the oxidative phosphorylation and reprograms spermatozoa energy metabolism by disrupting flavoenzyme functions (PubMed:33882315). In mutant spermatozoa, fatty acid beta-oxidation is defective with significantly reduced levels of acyl-carnitines and metabolites from the TCA cycle (the citric acid cycle) and accumulation of triglycerides and free fatty acids (PubMed:33882315). Sperms display abnormal flagellar bending and impaired motility and capacitation (PubMed:27811987).</text>
</comment>
<comment type="similarity">
    <text evidence="7">Belongs to the major facilitator (TC 2.A.1) superfamily. Organic cation transporter (TC 2.A.1.19) family.</text>
</comment>
<evidence type="ECO:0000255" key="1"/>
<evidence type="ECO:0000256" key="2">
    <source>
        <dbReference type="SAM" id="MobiDB-lite"/>
    </source>
</evidence>
<evidence type="ECO:0000269" key="3">
    <source>
    </source>
</evidence>
<evidence type="ECO:0000269" key="4">
    <source>
    </source>
</evidence>
<evidence type="ECO:0000303" key="5">
    <source>
    </source>
</evidence>
<evidence type="ECO:0000303" key="6">
    <source>
    </source>
</evidence>
<evidence type="ECO:0000305" key="7"/>
<evidence type="ECO:0000312" key="8">
    <source>
        <dbReference type="MGI" id="MGI:2685974"/>
    </source>
</evidence>
<gene>
    <name evidence="6 8" type="primary">Slc22a14</name>
    <name evidence="8" type="synonym">Gm1128</name>
</gene>
<reference key="1">
    <citation type="journal article" date="2009" name="PLoS Biol.">
        <title>Lineage-specific biology revealed by a finished genome assembly of the mouse.</title>
        <authorList>
            <person name="Church D.M."/>
            <person name="Goodstadt L."/>
            <person name="Hillier L.W."/>
            <person name="Zody M.C."/>
            <person name="Goldstein S."/>
            <person name="She X."/>
            <person name="Bult C.J."/>
            <person name="Agarwala R."/>
            <person name="Cherry J.L."/>
            <person name="DiCuccio M."/>
            <person name="Hlavina W."/>
            <person name="Kapustin Y."/>
            <person name="Meric P."/>
            <person name="Maglott D."/>
            <person name="Birtle Z."/>
            <person name="Marques A.C."/>
            <person name="Graves T."/>
            <person name="Zhou S."/>
            <person name="Teague B."/>
            <person name="Potamousis K."/>
            <person name="Churas C."/>
            <person name="Place M."/>
            <person name="Herschleb J."/>
            <person name="Runnheim R."/>
            <person name="Forrest D."/>
            <person name="Amos-Landgraf J."/>
            <person name="Schwartz D.C."/>
            <person name="Cheng Z."/>
            <person name="Lindblad-Toh K."/>
            <person name="Eichler E.E."/>
            <person name="Ponting C.P."/>
        </authorList>
    </citation>
    <scope>NUCLEOTIDE SEQUENCE [LARGE SCALE GENOMIC DNA]</scope>
    <source>
        <strain>C57BL/6J</strain>
    </source>
</reference>
<reference key="2">
    <citation type="journal article" date="2004" name="Genome Res.">
        <title>The status, quality, and expansion of the NIH full-length cDNA project: the Mammalian Gene Collection (MGC).</title>
        <authorList>
            <consortium name="The MGC Project Team"/>
        </authorList>
    </citation>
    <scope>NUCLEOTIDE SEQUENCE [LARGE SCALE MRNA]</scope>
    <source>
        <tissue>Testis</tissue>
    </source>
</reference>
<reference key="3">
    <citation type="journal article" date="2016" name="Sci. Rep.">
        <title>A critical role of solute carrier 22a14 in sperm motility and male fertility in mice.</title>
        <authorList>
            <person name="Maruyama S.Y."/>
            <person name="Ito M."/>
            <person name="Ikami Y."/>
            <person name="Okitsu Y."/>
            <person name="Ito C."/>
            <person name="Toshimori K."/>
            <person name="Fujii W."/>
            <person name="Yogo K."/>
        </authorList>
    </citation>
    <scope>FUNCTION</scope>
    <scope>SUBCELLULAR LOCATION</scope>
    <scope>DISRUPTION PHENOTYPE</scope>
    <scope>TISSUE SPECIFICITY</scope>
</reference>
<reference key="4">
    <citation type="journal article" date="2021" name="Cell Rep.">
        <title>SLC22A14 is a mitochondrial riboflavin transporter required for sperm oxidative phosphorylation and male fertility.</title>
        <authorList>
            <person name="Kuang W."/>
            <person name="Zhang J."/>
            <person name="Lan Z."/>
            <person name="Deepak R.N.V.K."/>
            <person name="Liu C."/>
            <person name="Ma Z."/>
            <person name="Cheng L."/>
            <person name="Zhao X."/>
            <person name="Meng X."/>
            <person name="Wang W."/>
            <person name="Wang X."/>
            <person name="Xu L."/>
            <person name="Jiao Y."/>
            <person name="Luo Q."/>
            <person name="Meng Z."/>
            <person name="Kee K."/>
            <person name="Liu X."/>
            <person name="Deng H."/>
            <person name="Li W."/>
            <person name="Fan H."/>
            <person name="Chen L."/>
        </authorList>
    </citation>
    <scope>FUNCTION</scope>
    <scope>TRANSPORTER ACTIVITY</scope>
    <scope>SUBCELLULAR LOCATION</scope>
    <scope>MUTAGENESIS OF HIS-275 AND 391-SER--SER-394</scope>
</reference>
<organism>
    <name type="scientific">Mus musculus</name>
    <name type="common">Mouse</name>
    <dbReference type="NCBI Taxonomy" id="10090"/>
    <lineage>
        <taxon>Eukaryota</taxon>
        <taxon>Metazoa</taxon>
        <taxon>Chordata</taxon>
        <taxon>Craniata</taxon>
        <taxon>Vertebrata</taxon>
        <taxon>Euteleostomi</taxon>
        <taxon>Mammalia</taxon>
        <taxon>Eutheria</taxon>
        <taxon>Euarchontoglires</taxon>
        <taxon>Glires</taxon>
        <taxon>Rodentia</taxon>
        <taxon>Myomorpha</taxon>
        <taxon>Muroidea</taxon>
        <taxon>Muridae</taxon>
        <taxon>Murinae</taxon>
        <taxon>Mus</taxon>
        <taxon>Mus</taxon>
    </lineage>
</organism>
<keyword id="KW-1003">Cell membrane</keyword>
<keyword id="KW-0966">Cell projection</keyword>
<keyword id="KW-0969">Cilium</keyword>
<keyword id="KW-0282">Flagellum</keyword>
<keyword id="KW-0325">Glycoprotein</keyword>
<keyword id="KW-0472">Membrane</keyword>
<keyword id="KW-0496">Mitochondrion</keyword>
<keyword id="KW-0999">Mitochondrion inner membrane</keyword>
<keyword id="KW-1185">Reference proteome</keyword>
<keyword id="KW-0812">Transmembrane</keyword>
<keyword id="KW-1133">Transmembrane helix</keyword>
<keyword id="KW-0813">Transport</keyword>
<dbReference type="EMBL" id="AC055818">
    <property type="status" value="NOT_ANNOTATED_CDS"/>
    <property type="molecule type" value="Genomic_DNA"/>
</dbReference>
<dbReference type="EMBL" id="AC128702">
    <property type="status" value="NOT_ANNOTATED_CDS"/>
    <property type="molecule type" value="Genomic_DNA"/>
</dbReference>
<dbReference type="EMBL" id="BC100471">
    <property type="protein sequence ID" value="AAI00472.1"/>
    <property type="molecule type" value="mRNA"/>
</dbReference>
<dbReference type="CCDS" id="CCDS23609.1"/>
<dbReference type="RefSeq" id="NP_001032838.1">
    <property type="nucleotide sequence ID" value="NM_001037749.3"/>
</dbReference>
<dbReference type="RefSeq" id="NP_001397565.1">
    <property type="nucleotide sequence ID" value="NM_001410636.1"/>
</dbReference>
<dbReference type="RefSeq" id="XP_011241282.1">
    <property type="nucleotide sequence ID" value="XM_011242980.1"/>
</dbReference>
<dbReference type="RefSeq" id="XP_011241283.1">
    <property type="nucleotide sequence ID" value="XM_011242981.1"/>
</dbReference>
<dbReference type="RefSeq" id="XP_011241284.1">
    <property type="nucleotide sequence ID" value="XM_011242982.1"/>
</dbReference>
<dbReference type="RefSeq" id="XP_011241285.1">
    <property type="nucleotide sequence ID" value="XM_011242983.1"/>
</dbReference>
<dbReference type="SMR" id="Q497L9"/>
<dbReference type="FunCoup" id="Q497L9">
    <property type="interactions" value="1"/>
</dbReference>
<dbReference type="STRING" id="10090.ENSMUSP00000091289"/>
<dbReference type="GlyCosmos" id="Q497L9">
    <property type="glycosylation" value="4 sites, No reported glycans"/>
</dbReference>
<dbReference type="GlyGen" id="Q497L9">
    <property type="glycosylation" value="4 sites"/>
</dbReference>
<dbReference type="iPTMnet" id="Q497L9"/>
<dbReference type="PhosphoSitePlus" id="Q497L9"/>
<dbReference type="PaxDb" id="10090-ENSMUSP00000091289"/>
<dbReference type="ProteomicsDB" id="337333"/>
<dbReference type="Antibodypedia" id="28576">
    <property type="antibodies" value="40 antibodies from 13 providers"/>
</dbReference>
<dbReference type="Ensembl" id="ENSMUST00000093775.12">
    <property type="protein sequence ID" value="ENSMUSP00000091289.6"/>
    <property type="gene ID" value="ENSMUSG00000070280.15"/>
</dbReference>
<dbReference type="GeneID" id="382113"/>
<dbReference type="KEGG" id="mmu:382113"/>
<dbReference type="UCSC" id="uc009sak.1">
    <property type="organism name" value="mouse"/>
</dbReference>
<dbReference type="AGR" id="MGI:2685974"/>
<dbReference type="CTD" id="9389"/>
<dbReference type="MGI" id="MGI:2685974">
    <property type="gene designation" value="Slc22a14"/>
</dbReference>
<dbReference type="VEuPathDB" id="HostDB:ENSMUSG00000070280"/>
<dbReference type="eggNOG" id="KOG0255">
    <property type="taxonomic scope" value="Eukaryota"/>
</dbReference>
<dbReference type="GeneTree" id="ENSGT00940000162395"/>
<dbReference type="HOGENOM" id="CLU_001265_33_3_1"/>
<dbReference type="InParanoid" id="Q497L9"/>
<dbReference type="OMA" id="EHCFFSV"/>
<dbReference type="OrthoDB" id="5296287at2759"/>
<dbReference type="PhylomeDB" id="Q497L9"/>
<dbReference type="TreeFam" id="TF315847"/>
<dbReference type="BioGRID-ORCS" id="382113">
    <property type="hits" value="0 hits in 76 CRISPR screens"/>
</dbReference>
<dbReference type="ChiTaRS" id="Slc22a14">
    <property type="organism name" value="mouse"/>
</dbReference>
<dbReference type="PRO" id="PR:Q497L9"/>
<dbReference type="Proteomes" id="UP000000589">
    <property type="component" value="Chromosome 9"/>
</dbReference>
<dbReference type="RNAct" id="Q497L9">
    <property type="molecule type" value="protein"/>
</dbReference>
<dbReference type="Bgee" id="ENSMUSG00000070280">
    <property type="expression patterns" value="Expressed in spermatid and 17 other cell types or tissues"/>
</dbReference>
<dbReference type="ExpressionAtlas" id="Q497L9">
    <property type="expression patterns" value="baseline and differential"/>
</dbReference>
<dbReference type="GO" id="GO:0005743">
    <property type="term" value="C:mitochondrial inner membrane"/>
    <property type="evidence" value="ECO:0000314"/>
    <property type="project" value="UniProtKB"/>
</dbReference>
<dbReference type="GO" id="GO:0005886">
    <property type="term" value="C:plasma membrane"/>
    <property type="evidence" value="ECO:0007669"/>
    <property type="project" value="UniProtKB-KW"/>
</dbReference>
<dbReference type="GO" id="GO:0097228">
    <property type="term" value="C:sperm principal piece"/>
    <property type="evidence" value="ECO:0000314"/>
    <property type="project" value="MGI"/>
</dbReference>
<dbReference type="GO" id="GO:0032217">
    <property type="term" value="F:riboflavin transmembrane transporter activity"/>
    <property type="evidence" value="ECO:0000314"/>
    <property type="project" value="UniProtKB"/>
</dbReference>
<dbReference type="GO" id="GO:0030317">
    <property type="term" value="P:flagellated sperm motility"/>
    <property type="evidence" value="ECO:0000315"/>
    <property type="project" value="MGI"/>
</dbReference>
<dbReference type="GO" id="GO:0048240">
    <property type="term" value="P:sperm capacitation"/>
    <property type="evidence" value="ECO:0000315"/>
    <property type="project" value="MGI"/>
</dbReference>
<dbReference type="Gene3D" id="1.20.1250.20">
    <property type="entry name" value="MFS general substrate transporter like domains"/>
    <property type="match status" value="1"/>
</dbReference>
<dbReference type="InterPro" id="IPR020846">
    <property type="entry name" value="MFS_dom"/>
</dbReference>
<dbReference type="InterPro" id="IPR005828">
    <property type="entry name" value="MFS_sugar_transport-like"/>
</dbReference>
<dbReference type="InterPro" id="IPR036259">
    <property type="entry name" value="MFS_trans_sf"/>
</dbReference>
<dbReference type="PANTHER" id="PTHR24064">
    <property type="entry name" value="SOLUTE CARRIER FAMILY 22 MEMBER"/>
    <property type="match status" value="1"/>
</dbReference>
<dbReference type="Pfam" id="PF00083">
    <property type="entry name" value="Sugar_tr"/>
    <property type="match status" value="1"/>
</dbReference>
<dbReference type="SUPFAM" id="SSF103473">
    <property type="entry name" value="MFS general substrate transporter"/>
    <property type="match status" value="1"/>
</dbReference>
<dbReference type="PROSITE" id="PS50850">
    <property type="entry name" value="MFS"/>
    <property type="match status" value="1"/>
</dbReference>
<accession>Q497L9</accession>
<feature type="chain" id="PRO_0000452752" description="Solute carrier family 22 member 14">
    <location>
        <begin position="1"/>
        <end position="629"/>
    </location>
</feature>
<feature type="topological domain" description="Cytoplasmic" evidence="7">
    <location>
        <begin position="1"/>
        <end position="67"/>
    </location>
</feature>
<feature type="transmembrane region" description="Helical" evidence="1">
    <location>
        <begin position="68"/>
        <end position="88"/>
    </location>
</feature>
<feature type="topological domain" description="Extracellular" evidence="7">
    <location>
        <begin position="89"/>
        <end position="183"/>
    </location>
</feature>
<feature type="transmembrane region" description="Helical" evidence="1">
    <location>
        <begin position="184"/>
        <end position="204"/>
    </location>
</feature>
<feature type="topological domain" description="Cytoplasmic" evidence="7">
    <location>
        <begin position="205"/>
        <end position="209"/>
    </location>
</feature>
<feature type="transmembrane region" description="Helical" evidence="1">
    <location>
        <begin position="210"/>
        <end position="230"/>
    </location>
</feature>
<feature type="topological domain" description="Extracellular" evidence="7">
    <location>
        <begin position="231"/>
        <end position="240"/>
    </location>
</feature>
<feature type="transmembrane region" description="Helical" evidence="1">
    <location>
        <begin position="241"/>
        <end position="261"/>
    </location>
</feature>
<feature type="topological domain" description="Cytoplasmic" evidence="7">
    <location>
        <begin position="262"/>
        <end position="269"/>
    </location>
</feature>
<feature type="transmembrane region" description="Helical" evidence="1">
    <location>
        <begin position="270"/>
        <end position="290"/>
    </location>
</feature>
<feature type="topological domain" description="Extracellular" evidence="7">
    <location>
        <begin position="291"/>
        <end position="295"/>
    </location>
</feature>
<feature type="transmembrane region" description="Helical" evidence="1">
    <location>
        <begin position="296"/>
        <end position="316"/>
    </location>
</feature>
<feature type="topological domain" description="Cytoplasmic" evidence="7">
    <location>
        <begin position="317"/>
        <end position="378"/>
    </location>
</feature>
<feature type="transmembrane region" description="Helical" evidence="1">
    <location>
        <begin position="379"/>
        <end position="399"/>
    </location>
</feature>
<feature type="topological domain" description="Extracellular" evidence="7">
    <location>
        <begin position="400"/>
        <end position="409"/>
    </location>
</feature>
<feature type="transmembrane region" description="Helical" evidence="1">
    <location>
        <begin position="410"/>
        <end position="430"/>
    </location>
</feature>
<feature type="topological domain" description="Cytoplasmic" evidence="7">
    <location>
        <begin position="431"/>
        <end position="436"/>
    </location>
</feature>
<feature type="transmembrane region" description="Helical" evidence="1">
    <location>
        <begin position="437"/>
        <end position="457"/>
    </location>
</feature>
<feature type="topological domain" description="Extracellular" evidence="7">
    <location>
        <begin position="458"/>
        <end position="463"/>
    </location>
</feature>
<feature type="transmembrane region" description="Helical" evidence="1">
    <location>
        <begin position="464"/>
        <end position="484"/>
    </location>
</feature>
<feature type="topological domain" description="Cytoplasmic" evidence="7">
    <location>
        <begin position="485"/>
        <end position="496"/>
    </location>
</feature>
<feature type="transmembrane region" description="Helical" evidence="1">
    <location>
        <begin position="497"/>
        <end position="517"/>
    </location>
</feature>
<feature type="topological domain" description="Extracellular" evidence="7">
    <location>
        <begin position="518"/>
        <end position="523"/>
    </location>
</feature>
<feature type="transmembrane region" description="Helical" evidence="1">
    <location>
        <begin position="524"/>
        <end position="544"/>
    </location>
</feature>
<feature type="topological domain" description="Cytoplasmic" evidence="7">
    <location>
        <begin position="545"/>
        <end position="629"/>
    </location>
</feature>
<feature type="region of interest" description="Disordered" evidence="2">
    <location>
        <begin position="1"/>
        <end position="21"/>
    </location>
</feature>
<feature type="compositionally biased region" description="Polar residues" evidence="2">
    <location>
        <begin position="7"/>
        <end position="16"/>
    </location>
</feature>
<feature type="glycosylation site" description="N-linked (GlcNAc...) asparagine" evidence="1">
    <location>
        <position position="98"/>
    </location>
</feature>
<feature type="glycosylation site" description="N-linked (GlcNAc...) asparagine" evidence="1">
    <location>
        <position position="116"/>
    </location>
</feature>
<feature type="glycosylation site" description="N-linked (GlcNAc...) asparagine" evidence="1">
    <location>
        <position position="124"/>
    </location>
</feature>
<feature type="glycosylation site" description="N-linked (GlcNAc...) asparagine" evidence="1">
    <location>
        <position position="149"/>
    </location>
</feature>
<feature type="mutagenesis site" description="Strongly reduced riboflavin transport; when associated with 391-A--A-394." evidence="4">
    <original>H</original>
    <variation>A</variation>
    <location>
        <position position="275"/>
    </location>
</feature>
<feature type="mutagenesis site" description="Strongly reduced riboflavin transport; when associated with A-275." evidence="4">
    <original>SYIS</original>
    <variation>AYIA</variation>
    <location>
        <begin position="391"/>
        <end position="394"/>
    </location>
</feature>
<protein>
    <recommendedName>
        <fullName evidence="5 6">Solute carrier family 22 member 14</fullName>
    </recommendedName>
</protein>
<sequence>MKEDQNYKTAFGSQNSRDTHRHEISFPSQNWSLEMLLRRLKAIDARRDDKFASVMDAIGEFGTFQWRLVVLTFIPSILSTFFIFSHHFLLTAQRPYCNTSWILEVGPNLTEDEQLNLTLPRAPNGSFLTCLMYIPVPWDLDSIIHFGLNYTETCKFGWIYPFAHTRSLINEFDLVCGNEPNKENGLTVFLSGVLTGSLLFGFLSDKLGRYPIILLSLLGFLIFGFGTAFVSSFYQYLFFRFFVAQASVGYAICSVSLVMEWLVGEHRAQAVILQHSFLTIGVILLTGLAYKVVHWRLLCLLGGMPMFPLICNIWVLRESPRWLMVRGKVEEAKKVLCYAAEVNKKTIPLNLLNELQISGKKVAKASILDFCTNQHLFKVVLAIGCVWFTVSYISFTLNLKMNDFGLDVYFVQMVRSIVAVPARLCCIILLEYFGRKWALNLTLFLVTSMCLFLLFLPQEPKSTIILTLMLAEFSMAGTLSIFFIYTAELLPTVLRSTGLGMVSLAWVAGAISSVAIFKQTKTQLPIFFCCLCCVLALCFSSLVPETGSQSLRDSIEYNIRDSIEPKDRNKDVPMVIAEESMSDIVADSEVTNTTLNAVTFKPEENSLLNMTLEVPKMDLPVQSLKAQPP</sequence>
<proteinExistence type="evidence at protein level"/>
<name>S22AE_MOUSE</name>